<evidence type="ECO:0000255" key="1">
    <source>
        <dbReference type="HAMAP-Rule" id="MF_00186"/>
    </source>
</evidence>
<proteinExistence type="inferred from homology"/>
<feature type="chain" id="PRO_1000203955" description="Glycerol kinase">
    <location>
        <begin position="1"/>
        <end position="496"/>
    </location>
</feature>
<feature type="binding site" evidence="1">
    <location>
        <position position="12"/>
    </location>
    <ligand>
        <name>ADP</name>
        <dbReference type="ChEBI" id="CHEBI:456216"/>
    </ligand>
</feature>
<feature type="binding site" evidence="1">
    <location>
        <position position="12"/>
    </location>
    <ligand>
        <name>ATP</name>
        <dbReference type="ChEBI" id="CHEBI:30616"/>
    </ligand>
</feature>
<feature type="binding site" evidence="1">
    <location>
        <position position="12"/>
    </location>
    <ligand>
        <name>sn-glycerol 3-phosphate</name>
        <dbReference type="ChEBI" id="CHEBI:57597"/>
    </ligand>
</feature>
<feature type="binding site" evidence="1">
    <location>
        <position position="13"/>
    </location>
    <ligand>
        <name>ATP</name>
        <dbReference type="ChEBI" id="CHEBI:30616"/>
    </ligand>
</feature>
<feature type="binding site" evidence="1">
    <location>
        <position position="14"/>
    </location>
    <ligand>
        <name>ATP</name>
        <dbReference type="ChEBI" id="CHEBI:30616"/>
    </ligand>
</feature>
<feature type="binding site" evidence="1">
    <location>
        <position position="16"/>
    </location>
    <ligand>
        <name>ADP</name>
        <dbReference type="ChEBI" id="CHEBI:456216"/>
    </ligand>
</feature>
<feature type="binding site" evidence="1">
    <location>
        <position position="82"/>
    </location>
    <ligand>
        <name>glycerol</name>
        <dbReference type="ChEBI" id="CHEBI:17754"/>
    </ligand>
</feature>
<feature type="binding site" evidence="1">
    <location>
        <position position="82"/>
    </location>
    <ligand>
        <name>sn-glycerol 3-phosphate</name>
        <dbReference type="ChEBI" id="CHEBI:57597"/>
    </ligand>
</feature>
<feature type="binding site" evidence="1">
    <location>
        <position position="83"/>
    </location>
    <ligand>
        <name>glycerol</name>
        <dbReference type="ChEBI" id="CHEBI:17754"/>
    </ligand>
</feature>
<feature type="binding site" evidence="1">
    <location>
        <position position="83"/>
    </location>
    <ligand>
        <name>sn-glycerol 3-phosphate</name>
        <dbReference type="ChEBI" id="CHEBI:57597"/>
    </ligand>
</feature>
<feature type="binding site" evidence="1">
    <location>
        <position position="134"/>
    </location>
    <ligand>
        <name>glycerol</name>
        <dbReference type="ChEBI" id="CHEBI:17754"/>
    </ligand>
</feature>
<feature type="binding site" evidence="1">
    <location>
        <position position="134"/>
    </location>
    <ligand>
        <name>sn-glycerol 3-phosphate</name>
        <dbReference type="ChEBI" id="CHEBI:57597"/>
    </ligand>
</feature>
<feature type="binding site" evidence="1">
    <location>
        <position position="244"/>
    </location>
    <ligand>
        <name>glycerol</name>
        <dbReference type="ChEBI" id="CHEBI:17754"/>
    </ligand>
</feature>
<feature type="binding site" evidence="1">
    <location>
        <position position="244"/>
    </location>
    <ligand>
        <name>sn-glycerol 3-phosphate</name>
        <dbReference type="ChEBI" id="CHEBI:57597"/>
    </ligand>
</feature>
<feature type="binding site" evidence="1">
    <location>
        <position position="245"/>
    </location>
    <ligand>
        <name>glycerol</name>
        <dbReference type="ChEBI" id="CHEBI:17754"/>
    </ligand>
</feature>
<feature type="binding site" evidence="1">
    <location>
        <position position="266"/>
    </location>
    <ligand>
        <name>ADP</name>
        <dbReference type="ChEBI" id="CHEBI:456216"/>
    </ligand>
</feature>
<feature type="binding site" evidence="1">
    <location>
        <position position="266"/>
    </location>
    <ligand>
        <name>ATP</name>
        <dbReference type="ChEBI" id="CHEBI:30616"/>
    </ligand>
</feature>
<feature type="binding site" evidence="1">
    <location>
        <position position="309"/>
    </location>
    <ligand>
        <name>ADP</name>
        <dbReference type="ChEBI" id="CHEBI:456216"/>
    </ligand>
</feature>
<feature type="binding site" evidence="1">
    <location>
        <position position="309"/>
    </location>
    <ligand>
        <name>ATP</name>
        <dbReference type="ChEBI" id="CHEBI:30616"/>
    </ligand>
</feature>
<feature type="binding site" evidence="1">
    <location>
        <position position="313"/>
    </location>
    <ligand>
        <name>ATP</name>
        <dbReference type="ChEBI" id="CHEBI:30616"/>
    </ligand>
</feature>
<feature type="binding site" evidence="1">
    <location>
        <position position="410"/>
    </location>
    <ligand>
        <name>ADP</name>
        <dbReference type="ChEBI" id="CHEBI:456216"/>
    </ligand>
</feature>
<feature type="binding site" evidence="1">
    <location>
        <position position="410"/>
    </location>
    <ligand>
        <name>ATP</name>
        <dbReference type="ChEBI" id="CHEBI:30616"/>
    </ligand>
</feature>
<feature type="binding site" evidence="1">
    <location>
        <position position="414"/>
    </location>
    <ligand>
        <name>ADP</name>
        <dbReference type="ChEBI" id="CHEBI:456216"/>
    </ligand>
</feature>
<feature type="modified residue" description="Phosphohistidine; by HPr" evidence="1">
    <location>
        <position position="230"/>
    </location>
</feature>
<name>GLPK_GEOSW</name>
<sequence>MERYILSLDQGTTSSRAILFNKNGEIVHIAQREFKQYFPKPGWVEHNANEIWGSILAVIATVLSEASVQPEQVAAIGITNQRETTVVWDKHTGLPIYNAIVWQSRQTADICEQLKQQGYDELFRKKTGLLIDPYFSGTKVKWILDNVEGAREKAEKGDLLFGTIDTWLIWKLSGGRAHVTDYSNASRTLLFNIHTLQWDDEILNILGIPKSMLPKVRPSSEVYAKTIPHHFFGVEVPIAGAAGDQQAALFGQACFEEGMAKNTYGTGCFMLMNTGEKAVQSKHGLLTTIAWGIDGKVEYALEGSIFVAGSAVQWLRDGLRMIKKASDSETYAEKVDSTDGVYVVPAFVGLGTPYWDSDVRGAVFGLTRGTTKEHFIRATLESLAYQTKDVLAAMEADSGIALKTLRVDGGAVKNNFLMQFQSDMLGVPVERPVINETTALGAAYLAGLAVGYWKDRKEIASQWQLERQFEPQMAKEKQEQLYAGWKKAVKAAMAFK</sequence>
<reference key="1">
    <citation type="submission" date="2009-06" db="EMBL/GenBank/DDBJ databases">
        <title>Complete sequence of chromosome of Geopacillus sp. WCH70.</title>
        <authorList>
            <consortium name="US DOE Joint Genome Institute"/>
            <person name="Lucas S."/>
            <person name="Copeland A."/>
            <person name="Lapidus A."/>
            <person name="Glavina del Rio T."/>
            <person name="Dalin E."/>
            <person name="Tice H."/>
            <person name="Bruce D."/>
            <person name="Goodwin L."/>
            <person name="Pitluck S."/>
            <person name="Chertkov O."/>
            <person name="Brettin T."/>
            <person name="Detter J.C."/>
            <person name="Han C."/>
            <person name="Larimer F."/>
            <person name="Land M."/>
            <person name="Hauser L."/>
            <person name="Kyrpides N."/>
            <person name="Mikhailova N."/>
            <person name="Brumm P."/>
            <person name="Mead D.A."/>
            <person name="Richardson P."/>
        </authorList>
    </citation>
    <scope>NUCLEOTIDE SEQUENCE [LARGE SCALE GENOMIC DNA]</scope>
    <source>
        <strain>WCH70</strain>
    </source>
</reference>
<organism>
    <name type="scientific">Geobacillus sp. (strain WCH70)</name>
    <dbReference type="NCBI Taxonomy" id="471223"/>
    <lineage>
        <taxon>Bacteria</taxon>
        <taxon>Bacillati</taxon>
        <taxon>Bacillota</taxon>
        <taxon>Bacilli</taxon>
        <taxon>Bacillales</taxon>
        <taxon>Anoxybacillaceae</taxon>
        <taxon>Geobacillus</taxon>
    </lineage>
</organism>
<protein>
    <recommendedName>
        <fullName evidence="1">Glycerol kinase</fullName>
        <ecNumber evidence="1">2.7.1.30</ecNumber>
    </recommendedName>
    <alternativeName>
        <fullName evidence="1">ATP:glycerol 3-phosphotransferase</fullName>
    </alternativeName>
    <alternativeName>
        <fullName evidence="1">Glycerokinase</fullName>
        <shortName evidence="1">GK</shortName>
    </alternativeName>
</protein>
<keyword id="KW-0067">ATP-binding</keyword>
<keyword id="KW-0319">Glycerol metabolism</keyword>
<keyword id="KW-0418">Kinase</keyword>
<keyword id="KW-0547">Nucleotide-binding</keyword>
<keyword id="KW-0597">Phosphoprotein</keyword>
<keyword id="KW-0808">Transferase</keyword>
<comment type="function">
    <text evidence="1">Key enzyme in the regulation of glycerol uptake and metabolism. Catalyzes the phosphorylation of glycerol to yield sn-glycerol 3-phosphate.</text>
</comment>
<comment type="catalytic activity">
    <reaction evidence="1">
        <text>glycerol + ATP = sn-glycerol 3-phosphate + ADP + H(+)</text>
        <dbReference type="Rhea" id="RHEA:21644"/>
        <dbReference type="ChEBI" id="CHEBI:15378"/>
        <dbReference type="ChEBI" id="CHEBI:17754"/>
        <dbReference type="ChEBI" id="CHEBI:30616"/>
        <dbReference type="ChEBI" id="CHEBI:57597"/>
        <dbReference type="ChEBI" id="CHEBI:456216"/>
        <dbReference type="EC" id="2.7.1.30"/>
    </reaction>
</comment>
<comment type="activity regulation">
    <text evidence="1">Activated by phosphorylation and inhibited by fructose 1,6-bisphosphate (FBP).</text>
</comment>
<comment type="pathway">
    <text evidence="1">Polyol metabolism; glycerol degradation via glycerol kinase pathway; sn-glycerol 3-phosphate from glycerol: step 1/1.</text>
</comment>
<comment type="subunit">
    <text evidence="1">Homotetramer and homodimer (in equilibrium).</text>
</comment>
<comment type="PTM">
    <text evidence="1">The phosphoenolpyruvate-dependent sugar phosphotransferase system (PTS), including enzyme I, and histidine-containing protein (HPr) are required for the phosphorylation, which leads to the activation of the enzyme.</text>
</comment>
<comment type="similarity">
    <text evidence="1">Belongs to the FGGY kinase family.</text>
</comment>
<gene>
    <name evidence="1" type="primary">glpK</name>
    <name type="ordered locus">GWCH70_1268</name>
</gene>
<accession>C5DA06</accession>
<dbReference type="EC" id="2.7.1.30" evidence="1"/>
<dbReference type="EMBL" id="CP001638">
    <property type="protein sequence ID" value="ACS24120.1"/>
    <property type="molecule type" value="Genomic_DNA"/>
</dbReference>
<dbReference type="SMR" id="C5DA06"/>
<dbReference type="STRING" id="471223.GWCH70_1268"/>
<dbReference type="KEGG" id="gwc:GWCH70_1268"/>
<dbReference type="eggNOG" id="COG0554">
    <property type="taxonomic scope" value="Bacteria"/>
</dbReference>
<dbReference type="HOGENOM" id="CLU_009281_2_3_9"/>
<dbReference type="OrthoDB" id="9805576at2"/>
<dbReference type="UniPathway" id="UPA00618">
    <property type="reaction ID" value="UER00672"/>
</dbReference>
<dbReference type="GO" id="GO:0005829">
    <property type="term" value="C:cytosol"/>
    <property type="evidence" value="ECO:0007669"/>
    <property type="project" value="TreeGrafter"/>
</dbReference>
<dbReference type="GO" id="GO:0005524">
    <property type="term" value="F:ATP binding"/>
    <property type="evidence" value="ECO:0007669"/>
    <property type="project" value="UniProtKB-UniRule"/>
</dbReference>
<dbReference type="GO" id="GO:0004370">
    <property type="term" value="F:glycerol kinase activity"/>
    <property type="evidence" value="ECO:0000250"/>
    <property type="project" value="UniProtKB"/>
</dbReference>
<dbReference type="GO" id="GO:0019563">
    <property type="term" value="P:glycerol catabolic process"/>
    <property type="evidence" value="ECO:0007669"/>
    <property type="project" value="UniProtKB-UniRule"/>
</dbReference>
<dbReference type="GO" id="GO:0006071">
    <property type="term" value="P:glycerol metabolic process"/>
    <property type="evidence" value="ECO:0000250"/>
    <property type="project" value="UniProtKB"/>
</dbReference>
<dbReference type="GO" id="GO:0006072">
    <property type="term" value="P:glycerol-3-phosphate metabolic process"/>
    <property type="evidence" value="ECO:0007669"/>
    <property type="project" value="InterPro"/>
</dbReference>
<dbReference type="CDD" id="cd07786">
    <property type="entry name" value="FGGY_EcGK_like"/>
    <property type="match status" value="1"/>
</dbReference>
<dbReference type="FunFam" id="3.30.420.40:FF:000007">
    <property type="entry name" value="Glycerol kinase"/>
    <property type="match status" value="1"/>
</dbReference>
<dbReference type="FunFam" id="3.30.420.40:FF:000008">
    <property type="entry name" value="Glycerol kinase"/>
    <property type="match status" value="1"/>
</dbReference>
<dbReference type="Gene3D" id="3.30.420.40">
    <property type="match status" value="2"/>
</dbReference>
<dbReference type="HAMAP" id="MF_00186">
    <property type="entry name" value="Glycerol_kin"/>
    <property type="match status" value="1"/>
</dbReference>
<dbReference type="InterPro" id="IPR043129">
    <property type="entry name" value="ATPase_NBD"/>
</dbReference>
<dbReference type="InterPro" id="IPR000577">
    <property type="entry name" value="Carb_kinase_FGGY"/>
</dbReference>
<dbReference type="InterPro" id="IPR018483">
    <property type="entry name" value="Carb_kinase_FGGY_CS"/>
</dbReference>
<dbReference type="InterPro" id="IPR018485">
    <property type="entry name" value="FGGY_C"/>
</dbReference>
<dbReference type="InterPro" id="IPR018484">
    <property type="entry name" value="FGGY_N"/>
</dbReference>
<dbReference type="InterPro" id="IPR005999">
    <property type="entry name" value="Glycerol_kin"/>
</dbReference>
<dbReference type="NCBIfam" id="TIGR01311">
    <property type="entry name" value="glycerol_kin"/>
    <property type="match status" value="1"/>
</dbReference>
<dbReference type="NCBIfam" id="NF000756">
    <property type="entry name" value="PRK00047.1"/>
    <property type="match status" value="1"/>
</dbReference>
<dbReference type="PANTHER" id="PTHR10196:SF69">
    <property type="entry name" value="GLYCEROL KINASE"/>
    <property type="match status" value="1"/>
</dbReference>
<dbReference type="PANTHER" id="PTHR10196">
    <property type="entry name" value="SUGAR KINASE"/>
    <property type="match status" value="1"/>
</dbReference>
<dbReference type="Pfam" id="PF02782">
    <property type="entry name" value="FGGY_C"/>
    <property type="match status" value="1"/>
</dbReference>
<dbReference type="Pfam" id="PF00370">
    <property type="entry name" value="FGGY_N"/>
    <property type="match status" value="1"/>
</dbReference>
<dbReference type="PIRSF" id="PIRSF000538">
    <property type="entry name" value="GlpK"/>
    <property type="match status" value="1"/>
</dbReference>
<dbReference type="SUPFAM" id="SSF53067">
    <property type="entry name" value="Actin-like ATPase domain"/>
    <property type="match status" value="2"/>
</dbReference>
<dbReference type="PROSITE" id="PS00933">
    <property type="entry name" value="FGGY_KINASES_1"/>
    <property type="match status" value="1"/>
</dbReference>
<dbReference type="PROSITE" id="PS00445">
    <property type="entry name" value="FGGY_KINASES_2"/>
    <property type="match status" value="1"/>
</dbReference>